<accession>Q57649</accession>
<reference key="1">
    <citation type="journal article" date="1996" name="Science">
        <title>Complete genome sequence of the methanogenic archaeon, Methanococcus jannaschii.</title>
        <authorList>
            <person name="Bult C.J."/>
            <person name="White O."/>
            <person name="Olsen G.J."/>
            <person name="Zhou L."/>
            <person name="Fleischmann R.D."/>
            <person name="Sutton G.G."/>
            <person name="Blake J.A."/>
            <person name="FitzGerald L.M."/>
            <person name="Clayton R.A."/>
            <person name="Gocayne J.D."/>
            <person name="Kerlavage A.R."/>
            <person name="Dougherty B.A."/>
            <person name="Tomb J.-F."/>
            <person name="Adams M.D."/>
            <person name="Reich C.I."/>
            <person name="Overbeek R."/>
            <person name="Kirkness E.F."/>
            <person name="Weinstock K.G."/>
            <person name="Merrick J.M."/>
            <person name="Glodek A."/>
            <person name="Scott J.L."/>
            <person name="Geoghagen N.S.M."/>
            <person name="Weidman J.F."/>
            <person name="Fuhrmann J.L."/>
            <person name="Nguyen D."/>
            <person name="Utterback T.R."/>
            <person name="Kelley J.M."/>
            <person name="Peterson J.D."/>
            <person name="Sadow P.W."/>
            <person name="Hanna M.C."/>
            <person name="Cotton M.D."/>
            <person name="Roberts K.M."/>
            <person name="Hurst M.A."/>
            <person name="Kaine B.P."/>
            <person name="Borodovsky M."/>
            <person name="Klenk H.-P."/>
            <person name="Fraser C.M."/>
            <person name="Smith H.O."/>
            <person name="Woese C.R."/>
            <person name="Venter J.C."/>
        </authorList>
    </citation>
    <scope>NUCLEOTIDE SEQUENCE [LARGE SCALE GENOMIC DNA]</scope>
    <source>
        <strain>ATCC 43067 / DSM 2661 / JAL-1 / JCM 10045 / NBRC 100440</strain>
    </source>
</reference>
<reference key="2">
    <citation type="journal article" date="2000" name="Nucleic Acids Res.">
        <title>Archaeal RNA polymerase subunits F and P are bona fide homologs of eukaryotic RPB4 and RPB12.</title>
        <authorList>
            <person name="Werner F."/>
            <person name="Eloranta J.J."/>
            <person name="Weinzierl R.O."/>
        </authorList>
    </citation>
    <scope>SUBUNIT</scope>
</reference>
<name>RPO10_METJA</name>
<dbReference type="EC" id="2.7.7.6" evidence="1"/>
<dbReference type="EMBL" id="L77117">
    <property type="protein sequence ID" value="AAB98176.1"/>
    <property type="molecule type" value="Genomic_DNA"/>
</dbReference>
<dbReference type="RefSeq" id="WP_010869691.1">
    <property type="nucleotide sequence ID" value="NC_000909.1"/>
</dbReference>
<dbReference type="SMR" id="Q57649"/>
<dbReference type="FunCoup" id="Q57649">
    <property type="interactions" value="67"/>
</dbReference>
<dbReference type="STRING" id="243232.MJ_0196"/>
<dbReference type="PaxDb" id="243232-MJ_0196"/>
<dbReference type="EnsemblBacteria" id="AAB98176">
    <property type="protein sequence ID" value="AAB98176"/>
    <property type="gene ID" value="MJ_0196"/>
</dbReference>
<dbReference type="GeneID" id="8803916"/>
<dbReference type="KEGG" id="mja:MJ_0196"/>
<dbReference type="eggNOG" id="arCOG04244">
    <property type="taxonomic scope" value="Archaea"/>
</dbReference>
<dbReference type="HOGENOM" id="CLU_143122_2_1_2"/>
<dbReference type="InParanoid" id="Q57649"/>
<dbReference type="OrthoDB" id="371754at2157"/>
<dbReference type="PhylomeDB" id="Q57649"/>
<dbReference type="Proteomes" id="UP000000805">
    <property type="component" value="Chromosome"/>
</dbReference>
<dbReference type="GO" id="GO:0005737">
    <property type="term" value="C:cytoplasm"/>
    <property type="evidence" value="ECO:0007669"/>
    <property type="project" value="UniProtKB-SubCell"/>
</dbReference>
<dbReference type="GO" id="GO:0000428">
    <property type="term" value="C:DNA-directed RNA polymerase complex"/>
    <property type="evidence" value="ECO:0007669"/>
    <property type="project" value="UniProtKB-KW"/>
</dbReference>
<dbReference type="GO" id="GO:0003677">
    <property type="term" value="F:DNA binding"/>
    <property type="evidence" value="ECO:0007669"/>
    <property type="project" value="InterPro"/>
</dbReference>
<dbReference type="GO" id="GO:0003899">
    <property type="term" value="F:DNA-directed RNA polymerase activity"/>
    <property type="evidence" value="ECO:0007669"/>
    <property type="project" value="UniProtKB-UniRule"/>
</dbReference>
<dbReference type="GO" id="GO:0008270">
    <property type="term" value="F:zinc ion binding"/>
    <property type="evidence" value="ECO:0000318"/>
    <property type="project" value="GO_Central"/>
</dbReference>
<dbReference type="GO" id="GO:0006351">
    <property type="term" value="P:DNA-templated transcription"/>
    <property type="evidence" value="ECO:0007669"/>
    <property type="project" value="UniProtKB-UniRule"/>
</dbReference>
<dbReference type="FunFam" id="1.10.10.60:FF:000335">
    <property type="entry name" value="DNA-directed RNA polymerase subunit N, putative"/>
    <property type="match status" value="1"/>
</dbReference>
<dbReference type="Gene3D" id="1.10.10.60">
    <property type="entry name" value="Homeodomain-like"/>
    <property type="match status" value="1"/>
</dbReference>
<dbReference type="HAMAP" id="MF_00250">
    <property type="entry name" value="RNApol_arch_Rpo10"/>
    <property type="match status" value="1"/>
</dbReference>
<dbReference type="InterPro" id="IPR023580">
    <property type="entry name" value="RNA_pol_su_RPB10"/>
</dbReference>
<dbReference type="InterPro" id="IPR020789">
    <property type="entry name" value="RNA_pol_suN_Zn-BS"/>
</dbReference>
<dbReference type="InterPro" id="IPR000268">
    <property type="entry name" value="RPABC5/Rpb10"/>
</dbReference>
<dbReference type="NCBIfam" id="NF003089">
    <property type="entry name" value="PRK04016.1"/>
    <property type="match status" value="1"/>
</dbReference>
<dbReference type="PANTHER" id="PTHR23431:SF3">
    <property type="entry name" value="DNA-DIRECTED RNA POLYMERASES I, II, AND III SUBUNIT RPABC5"/>
    <property type="match status" value="1"/>
</dbReference>
<dbReference type="PANTHER" id="PTHR23431">
    <property type="entry name" value="DNA-DIRECTED RNA POLYMERASES I, II, AND III SUBUNIT RPABC5 FAMILY MEMBER"/>
    <property type="match status" value="1"/>
</dbReference>
<dbReference type="Pfam" id="PF01194">
    <property type="entry name" value="RNA_pol_N"/>
    <property type="match status" value="1"/>
</dbReference>
<dbReference type="PIRSF" id="PIRSF005653">
    <property type="entry name" value="RNA_pol_N/8_sub"/>
    <property type="match status" value="1"/>
</dbReference>
<dbReference type="SUPFAM" id="SSF46924">
    <property type="entry name" value="RNA polymerase subunit RPB10"/>
    <property type="match status" value="1"/>
</dbReference>
<dbReference type="PROSITE" id="PS01112">
    <property type="entry name" value="RNA_POL_N_8KD"/>
    <property type="match status" value="1"/>
</dbReference>
<sequence length="73" mass="8695">MMFPIRCFSCGNVIAEVFEEYKERILKGENPKDVLDDLGIKKYCCRRMFISYRIGEDGREIIDEIIAHDERYL</sequence>
<organism>
    <name type="scientific">Methanocaldococcus jannaschii (strain ATCC 43067 / DSM 2661 / JAL-1 / JCM 10045 / NBRC 100440)</name>
    <name type="common">Methanococcus jannaschii</name>
    <dbReference type="NCBI Taxonomy" id="243232"/>
    <lineage>
        <taxon>Archaea</taxon>
        <taxon>Methanobacteriati</taxon>
        <taxon>Methanobacteriota</taxon>
        <taxon>Methanomada group</taxon>
        <taxon>Methanococci</taxon>
        <taxon>Methanococcales</taxon>
        <taxon>Methanocaldococcaceae</taxon>
        <taxon>Methanocaldococcus</taxon>
    </lineage>
</organism>
<gene>
    <name evidence="1" type="primary">rpo10</name>
    <name evidence="1" type="synonym">rpoN</name>
    <name type="ordered locus">MJ0196</name>
</gene>
<proteinExistence type="evidence at protein level"/>
<keyword id="KW-0963">Cytoplasm</keyword>
<keyword id="KW-0240">DNA-directed RNA polymerase</keyword>
<keyword id="KW-0479">Metal-binding</keyword>
<keyword id="KW-0548">Nucleotidyltransferase</keyword>
<keyword id="KW-1185">Reference proteome</keyword>
<keyword id="KW-0804">Transcription</keyword>
<keyword id="KW-0808">Transferase</keyword>
<keyword id="KW-0862">Zinc</keyword>
<comment type="function">
    <text evidence="1">DNA-dependent RNA polymerase (RNAP) catalyzes the transcription of DNA into RNA using the four ribonucleoside triphosphates as substrates.</text>
</comment>
<comment type="catalytic activity">
    <reaction evidence="1">
        <text>RNA(n) + a ribonucleoside 5'-triphosphate = RNA(n+1) + diphosphate</text>
        <dbReference type="Rhea" id="RHEA:21248"/>
        <dbReference type="Rhea" id="RHEA-COMP:14527"/>
        <dbReference type="Rhea" id="RHEA-COMP:17342"/>
        <dbReference type="ChEBI" id="CHEBI:33019"/>
        <dbReference type="ChEBI" id="CHEBI:61557"/>
        <dbReference type="ChEBI" id="CHEBI:140395"/>
        <dbReference type="EC" id="2.7.7.6"/>
    </reaction>
</comment>
<comment type="cofactor">
    <cofactor evidence="1">
        <name>Zn(2+)</name>
        <dbReference type="ChEBI" id="CHEBI:29105"/>
    </cofactor>
    <text evidence="1">Binds 1 zinc ion.</text>
</comment>
<comment type="subunit">
    <text evidence="1 2">Part of the RNA polymerase complex (By similarity). Forms an Rpo3-Rpo10-Rpo11-Rpo12 complex upon coexpression (PubMed:11058130).</text>
</comment>
<comment type="subcellular location">
    <subcellularLocation>
        <location evidence="1">Cytoplasm</location>
    </subcellularLocation>
</comment>
<comment type="similarity">
    <text evidence="1">Belongs to the archaeal Rpo10/eukaryotic RPB10 RNA polymerase subunit family.</text>
</comment>
<feature type="chain" id="PRO_0000121349" description="DNA-directed RNA polymerase subunit Rpo10">
    <location>
        <begin position="1"/>
        <end position="73"/>
    </location>
</feature>
<feature type="binding site" evidence="1">
    <location>
        <position position="7"/>
    </location>
    <ligand>
        <name>Zn(2+)</name>
        <dbReference type="ChEBI" id="CHEBI:29105"/>
    </ligand>
</feature>
<feature type="binding site" evidence="1">
    <location>
        <position position="10"/>
    </location>
    <ligand>
        <name>Zn(2+)</name>
        <dbReference type="ChEBI" id="CHEBI:29105"/>
    </ligand>
</feature>
<feature type="binding site" evidence="1">
    <location>
        <position position="44"/>
    </location>
    <ligand>
        <name>Zn(2+)</name>
        <dbReference type="ChEBI" id="CHEBI:29105"/>
    </ligand>
</feature>
<feature type="binding site" evidence="1">
    <location>
        <position position="45"/>
    </location>
    <ligand>
        <name>Zn(2+)</name>
        <dbReference type="ChEBI" id="CHEBI:29105"/>
    </ligand>
</feature>
<protein>
    <recommendedName>
        <fullName evidence="1">DNA-directed RNA polymerase subunit Rpo10</fullName>
        <ecNumber evidence="1">2.7.7.6</ecNumber>
    </recommendedName>
    <alternativeName>
        <fullName evidence="1">DNA-directed RNA polymerase subunit N</fullName>
        <shortName evidence="3">mjN</shortName>
    </alternativeName>
</protein>
<evidence type="ECO:0000255" key="1">
    <source>
        <dbReference type="HAMAP-Rule" id="MF_00250"/>
    </source>
</evidence>
<evidence type="ECO:0000269" key="2">
    <source>
    </source>
</evidence>
<evidence type="ECO:0000303" key="3">
    <source>
    </source>
</evidence>